<feature type="chain" id="PRO_0000457443" description="Aquaporin-5">
    <location>
        <begin position="1"/>
        <end position="383"/>
    </location>
</feature>
<feature type="topological domain" description="Cytoplasmic" evidence="5">
    <location>
        <begin position="1"/>
        <end position="46"/>
    </location>
</feature>
<feature type="transmembrane region" description="Helical" evidence="1">
    <location>
        <begin position="47"/>
        <end position="67"/>
    </location>
</feature>
<feature type="topological domain" description="Extracellular" evidence="5">
    <location>
        <begin position="68"/>
        <end position="93"/>
    </location>
</feature>
<feature type="transmembrane region" description="Helical" evidence="1">
    <location>
        <begin position="94"/>
        <end position="114"/>
    </location>
</feature>
<feature type="topological domain" description="Cytoplasmic" evidence="5">
    <location>
        <position position="115"/>
    </location>
</feature>
<feature type="transmembrane region" description="Helical" evidence="1">
    <location>
        <begin position="116"/>
        <end position="136"/>
    </location>
</feature>
<feature type="topological domain" description="Extracellular" evidence="5">
    <location>
        <begin position="137"/>
        <end position="140"/>
    </location>
</feature>
<feature type="transmembrane region" description="Helical" evidence="1">
    <location>
        <begin position="141"/>
        <end position="161"/>
    </location>
</feature>
<feature type="topological domain" description="Cytoplasmic" evidence="5">
    <location>
        <begin position="162"/>
        <end position="180"/>
    </location>
</feature>
<feature type="transmembrane region" description="Helical" evidence="1">
    <location>
        <begin position="181"/>
        <end position="201"/>
    </location>
</feature>
<feature type="topological domain" description="Extracellular" evidence="5">
    <location>
        <begin position="202"/>
        <end position="207"/>
    </location>
</feature>
<feature type="transmembrane region" description="Helical" evidence="1">
    <location>
        <begin position="208"/>
        <end position="228"/>
    </location>
</feature>
<feature type="topological domain" description="Cytoplasmic" evidence="5">
    <location>
        <begin position="229"/>
        <end position="252"/>
    </location>
</feature>
<feature type="transmembrane region" description="Helical" evidence="1">
    <location>
        <begin position="253"/>
        <end position="273"/>
    </location>
</feature>
<feature type="topological domain" description="Extracellular" evidence="5">
    <location>
        <begin position="274"/>
        <end position="383"/>
    </location>
</feature>
<feature type="region of interest" description="Disordered" evidence="2">
    <location>
        <begin position="332"/>
        <end position="383"/>
    </location>
</feature>
<feature type="short sequence motif" description="NPA 1" evidence="6">
    <location>
        <begin position="122"/>
        <end position="124"/>
    </location>
</feature>
<feature type="short sequence motif" description="NPA 2" evidence="6">
    <location>
        <begin position="234"/>
        <end position="236"/>
    </location>
</feature>
<feature type="compositionally biased region" description="Polar residues" evidence="2">
    <location>
        <begin position="332"/>
        <end position="349"/>
    </location>
</feature>
<feature type="compositionally biased region" description="Basic and acidic residues" evidence="2">
    <location>
        <begin position="350"/>
        <end position="362"/>
    </location>
</feature>
<feature type="compositionally biased region" description="Low complexity" evidence="2">
    <location>
        <begin position="363"/>
        <end position="372"/>
    </location>
</feature>
<proteinExistence type="evidence at transcript level"/>
<organism>
    <name type="scientific">Botryotinia fuckeliana (strain B05.10)</name>
    <name type="common">Noble rot fungus</name>
    <name type="synonym">Botrytis cinerea</name>
    <dbReference type="NCBI Taxonomy" id="332648"/>
    <lineage>
        <taxon>Eukaryota</taxon>
        <taxon>Fungi</taxon>
        <taxon>Dikarya</taxon>
        <taxon>Ascomycota</taxon>
        <taxon>Pezizomycotina</taxon>
        <taxon>Leotiomycetes</taxon>
        <taxon>Helotiales</taxon>
        <taxon>Sclerotiniaceae</taxon>
        <taxon>Botrytis</taxon>
    </lineage>
</organism>
<evidence type="ECO:0000255" key="1"/>
<evidence type="ECO:0000256" key="2">
    <source>
        <dbReference type="SAM" id="MobiDB-lite"/>
    </source>
</evidence>
<evidence type="ECO:0000269" key="3">
    <source>
    </source>
</evidence>
<evidence type="ECO:0000303" key="4">
    <source>
    </source>
</evidence>
<evidence type="ECO:0000305" key="5"/>
<evidence type="ECO:0000305" key="6">
    <source>
    </source>
</evidence>
<dbReference type="EMBL" id="CP009806">
    <property type="protein sequence ID" value="ATZ46987.1"/>
    <property type="molecule type" value="Genomic_DNA"/>
</dbReference>
<dbReference type="SMR" id="A0A384J983"/>
<dbReference type="EnsemblFungi" id="Bcin02g03220.1">
    <property type="protein sequence ID" value="Bcin02p03220.1"/>
    <property type="gene ID" value="Bcin02g03220"/>
</dbReference>
<dbReference type="VEuPathDB" id="FungiDB:Bcin02g03220"/>
<dbReference type="OrthoDB" id="3222at2759"/>
<dbReference type="Proteomes" id="UP000001798">
    <property type="component" value="Chromosome bcin02"/>
</dbReference>
<dbReference type="GO" id="GO:0005886">
    <property type="term" value="C:plasma membrane"/>
    <property type="evidence" value="ECO:0007669"/>
    <property type="project" value="TreeGrafter"/>
</dbReference>
<dbReference type="GO" id="GO:0015250">
    <property type="term" value="F:water channel activity"/>
    <property type="evidence" value="ECO:0007669"/>
    <property type="project" value="TreeGrafter"/>
</dbReference>
<dbReference type="FunFam" id="1.20.1080.10:FF:000014">
    <property type="entry name" value="Aquaporin 1"/>
    <property type="match status" value="1"/>
</dbReference>
<dbReference type="Gene3D" id="1.20.1080.10">
    <property type="entry name" value="Glycerol uptake facilitator protein"/>
    <property type="match status" value="1"/>
</dbReference>
<dbReference type="InterPro" id="IPR023271">
    <property type="entry name" value="Aquaporin-like"/>
</dbReference>
<dbReference type="InterPro" id="IPR034294">
    <property type="entry name" value="Aquaporin_transptr"/>
</dbReference>
<dbReference type="InterPro" id="IPR000425">
    <property type="entry name" value="MIP"/>
</dbReference>
<dbReference type="PANTHER" id="PTHR19139:SF283">
    <property type="entry name" value="AQUAPORIN"/>
    <property type="match status" value="1"/>
</dbReference>
<dbReference type="PANTHER" id="PTHR19139">
    <property type="entry name" value="AQUAPORIN TRANSPORTER"/>
    <property type="match status" value="1"/>
</dbReference>
<dbReference type="Pfam" id="PF00230">
    <property type="entry name" value="MIP"/>
    <property type="match status" value="1"/>
</dbReference>
<dbReference type="PRINTS" id="PR00783">
    <property type="entry name" value="MINTRINSICP"/>
</dbReference>
<dbReference type="SUPFAM" id="SSF81338">
    <property type="entry name" value="Aquaporin-like"/>
    <property type="match status" value="1"/>
</dbReference>
<gene>
    <name evidence="4" type="primary">AQP5</name>
    <name type="ORF">BCIN_02g03220</name>
</gene>
<name>AQP5_BOTFB</name>
<protein>
    <recommendedName>
        <fullName evidence="4">Aquaporin-5</fullName>
    </recommendedName>
</protein>
<keyword id="KW-0472">Membrane</keyword>
<keyword id="KW-1185">Reference proteome</keyword>
<keyword id="KW-0677">Repeat</keyword>
<keyword id="KW-0812">Transmembrane</keyword>
<keyword id="KW-1133">Transmembrane helix</keyword>
<keyword id="KW-0813">Transport</keyword>
<comment type="function">
    <text evidence="3 6">Water channel required to facilitate the transport of water across membranes (Probable). May play a role in the vegetative growth (PubMed:26527167).</text>
</comment>
<comment type="catalytic activity">
    <reaction evidence="6">
        <text>H2O(in) = H2O(out)</text>
        <dbReference type="Rhea" id="RHEA:29667"/>
        <dbReference type="ChEBI" id="CHEBI:15377"/>
    </reaction>
</comment>
<comment type="subcellular location">
    <subcellularLocation>
        <location evidence="1">Membrane</location>
        <topology evidence="1">Multi-pass membrane protein</topology>
    </subcellularLocation>
</comment>
<comment type="induction">
    <text evidence="3">Expression is higher in vegetative hyphae than in conidia and infection structures.</text>
</comment>
<comment type="domain">
    <text evidence="6">Aquaporins contain two tandem repeats each containing three membrane-spanning domains and a pore-forming loop with the signature motif Asn-Pro-Ala (NPA) (Probable). The first NPA motif is truncated since it corresponds to DPA (Probable).</text>
</comment>
<comment type="disruption phenotype">
    <text evidence="3">Leads to a slight reduction in the vegetative growth rate and delayed conidiation.</text>
</comment>
<comment type="similarity">
    <text evidence="5">Belongs to the MIP/aquaporin (TC 1.A.8) family.</text>
</comment>
<reference key="1">
    <citation type="journal article" date="2011" name="PLoS Genet.">
        <title>Genomic analysis of the necrotrophic fungal pathogens Sclerotinia sclerotiorum and Botrytis cinerea.</title>
        <authorList>
            <person name="Amselem J."/>
            <person name="Cuomo C.A."/>
            <person name="van Kan J.A.L."/>
            <person name="Viaud M."/>
            <person name="Benito E.P."/>
            <person name="Couloux A."/>
            <person name="Coutinho P.M."/>
            <person name="de Vries R.P."/>
            <person name="Dyer P.S."/>
            <person name="Fillinger S."/>
            <person name="Fournier E."/>
            <person name="Gout L."/>
            <person name="Hahn M."/>
            <person name="Kohn L."/>
            <person name="Lapalu N."/>
            <person name="Plummer K.M."/>
            <person name="Pradier J.-M."/>
            <person name="Quevillon E."/>
            <person name="Sharon A."/>
            <person name="Simon A."/>
            <person name="ten Have A."/>
            <person name="Tudzynski B."/>
            <person name="Tudzynski P."/>
            <person name="Wincker P."/>
            <person name="Andrew M."/>
            <person name="Anthouard V."/>
            <person name="Beever R.E."/>
            <person name="Beffa R."/>
            <person name="Benoit I."/>
            <person name="Bouzid O."/>
            <person name="Brault B."/>
            <person name="Chen Z."/>
            <person name="Choquer M."/>
            <person name="Collemare J."/>
            <person name="Cotton P."/>
            <person name="Danchin E.G."/>
            <person name="Da Silva C."/>
            <person name="Gautier A."/>
            <person name="Giraud C."/>
            <person name="Giraud T."/>
            <person name="Gonzalez C."/>
            <person name="Grossetete S."/>
            <person name="Gueldener U."/>
            <person name="Henrissat B."/>
            <person name="Howlett B.J."/>
            <person name="Kodira C."/>
            <person name="Kretschmer M."/>
            <person name="Lappartient A."/>
            <person name="Leroch M."/>
            <person name="Levis C."/>
            <person name="Mauceli E."/>
            <person name="Neuveglise C."/>
            <person name="Oeser B."/>
            <person name="Pearson M."/>
            <person name="Poulain J."/>
            <person name="Poussereau N."/>
            <person name="Quesneville H."/>
            <person name="Rascle C."/>
            <person name="Schumacher J."/>
            <person name="Segurens B."/>
            <person name="Sexton A."/>
            <person name="Silva E."/>
            <person name="Sirven C."/>
            <person name="Soanes D.M."/>
            <person name="Talbot N.J."/>
            <person name="Templeton M."/>
            <person name="Yandava C."/>
            <person name="Yarden O."/>
            <person name="Zeng Q."/>
            <person name="Rollins J.A."/>
            <person name="Lebrun M.-H."/>
            <person name="Dickman M."/>
        </authorList>
    </citation>
    <scope>NUCLEOTIDE SEQUENCE [LARGE SCALE GENOMIC DNA]</scope>
    <source>
        <strain>B05.10</strain>
    </source>
</reference>
<reference key="2">
    <citation type="journal article" date="2012" name="Eukaryot. Cell">
        <title>Genome update of Botrytis cinerea strains B05.10 and T4.</title>
        <authorList>
            <person name="Staats M."/>
            <person name="van Kan J.A.L."/>
        </authorList>
    </citation>
    <scope>NUCLEOTIDE SEQUENCE [LARGE SCALE GENOMIC DNA]</scope>
    <source>
        <strain>B05.10</strain>
    </source>
</reference>
<reference key="3">
    <citation type="journal article" date="2017" name="Mol. Plant Pathol.">
        <title>A gapless genome sequence of the fungus Botrytis cinerea.</title>
        <authorList>
            <person name="van Kan J.A.L."/>
            <person name="Stassen J.H.M."/>
            <person name="Mosbach A."/>
            <person name="van der Lee T.A.J."/>
            <person name="Faino L."/>
            <person name="Farmer A.D."/>
            <person name="Papasotiriou D.G."/>
            <person name="Zhou S."/>
            <person name="Seidl M.F."/>
            <person name="Cottam E."/>
            <person name="Edel D."/>
            <person name="Hahn M."/>
            <person name="Schwartz D.C."/>
            <person name="Dietrich R.A."/>
            <person name="Widdison S."/>
            <person name="Scalliet G."/>
        </authorList>
    </citation>
    <scope>NUCLEOTIDE SEQUENCE [LARGE SCALE GENOMIC DNA]</scope>
    <source>
        <strain>B05.10</strain>
    </source>
</reference>
<reference key="4">
    <citation type="journal article" date="2016" name="New Phytol.">
        <title>Aquaporin8 regulates cellular development and reactive oxygen species production, a critical component of virulence in Botrytis cinerea.</title>
        <authorList>
            <person name="An B."/>
            <person name="Li B."/>
            <person name="Li H."/>
            <person name="Zhang Z."/>
            <person name="Qin G."/>
            <person name="Tian S."/>
        </authorList>
    </citation>
    <scope>FUNCTION</scope>
    <scope>DOMAIN</scope>
    <scope>INDUCTION</scope>
    <scope>DISRUPTION PHENOTYPE</scope>
</reference>
<accession>A0A384J983</accession>
<sequence length="383" mass="40202">MSVTTLNGQPTLNISGPGQTALSRLDPLKKVFTKFFSSIPQKVRGHVVAVIGELIGTTAFLFIAFSAAEVALASANDNKGDKVSYETKSISTTQILFIAFGAGISLVVNAWTFFRISGGLFDPAVSIALFFVGAIDLTRCVLLCIAQCLGAIAASAMAYGLYHGGLHTATTLKPGMSPAQGVIVEMILTCQLCFTVLMLAAEKHEATFLAPLGIGLSVFIGELAGVFWTGGSMNPARSLGPAVVTLSFPSYHWIYWVGPIAGAGLASIIYKLIKALEYETAQLSEGEMHAHPVEDSEKASGHTGPCECMCFKVAAQGQSSAASTLQVATTDARKSSSLVPTKSTKSGNSEVKKTETVVEEPAKTQPKPAPAADDGFFGEMYAD</sequence>